<feature type="chain" id="PRO_1000046561" description="Oxygen-dependent choline dehydrogenase">
    <location>
        <begin position="1"/>
        <end position="566"/>
    </location>
</feature>
<feature type="region of interest" description="Disordered" evidence="2">
    <location>
        <begin position="185"/>
        <end position="204"/>
    </location>
</feature>
<feature type="active site" description="Proton acceptor" evidence="1">
    <location>
        <position position="474"/>
    </location>
</feature>
<feature type="binding site" evidence="1">
    <location>
        <begin position="7"/>
        <end position="36"/>
    </location>
    <ligand>
        <name>FAD</name>
        <dbReference type="ChEBI" id="CHEBI:57692"/>
    </ligand>
</feature>
<protein>
    <recommendedName>
        <fullName evidence="1">Oxygen-dependent choline dehydrogenase</fullName>
        <shortName evidence="1">CDH</shortName>
        <shortName evidence="1">CHD</shortName>
        <ecNumber evidence="1">1.1.99.1</ecNumber>
    </recommendedName>
    <alternativeName>
        <fullName evidence="1">Betaine aldehyde dehydrogenase</fullName>
        <shortName evidence="1">BADH</shortName>
        <ecNumber evidence="1">1.2.1.8</ecNumber>
    </alternativeName>
</protein>
<sequence length="566" mass="62943">MTTREYDYIICGAGSAGNVLATRLTEDPNVTVLLLEAGGPDYRFDFRTQMPAALAYPLQGRRYNWAYETDPEPHMDNRRMECGRGKGLGGSSLINGMCYIRGNALDYDNWSTHQGLERWTYLDCLPYFRKAETRDVGPNDYHGGDGPVSVTTSKPGANPLFEAMVEAGVQAGYPRTDDLNGYQQEGFGPMDRTVTPKGRRASTARGYLDQAKTRPNLEIVTHALADRILFDGKRASGVAYLRGSERATAHARREVLVCSGAIASPQLLQRSGVGPGAWLKELDIPIVLDLPGVGQNLQDHLEMYIQYECKEPVSLYPALKWWNQPKIGLEWMLNGTGLGASNHFEAGGFIRTRDDDPWPNIQYHFLPVAINYNGSNAIEMHGFQAHVGSMRSPSRGRVKLRSRDPNDHPSILFNYMAEALDWREFRDAIRATREIMRQPALDRYRGRELNPGADCRSDKELDTFVRARAETAFHPSCSCKMGYDDMAVVDDEGRVHGLDGLRVVDASIMPIITTGNLNAPTIMIAEKIADRIRGREPLARANVAYYVANGAPARNVAKAVRQPETA</sequence>
<gene>
    <name evidence="1" type="primary">betA</name>
    <name type="ordered locus">Bcep1808_3431</name>
</gene>
<accession>A4JJG6</accession>
<comment type="function">
    <text evidence="1">Involved in the biosynthesis of the osmoprotectant glycine betaine. Catalyzes the oxidation of choline to betaine aldehyde and betaine aldehyde to glycine betaine at the same rate.</text>
</comment>
<comment type="catalytic activity">
    <reaction evidence="1">
        <text>choline + A = betaine aldehyde + AH2</text>
        <dbReference type="Rhea" id="RHEA:17433"/>
        <dbReference type="ChEBI" id="CHEBI:13193"/>
        <dbReference type="ChEBI" id="CHEBI:15354"/>
        <dbReference type="ChEBI" id="CHEBI:15710"/>
        <dbReference type="ChEBI" id="CHEBI:17499"/>
        <dbReference type="EC" id="1.1.99.1"/>
    </reaction>
</comment>
<comment type="catalytic activity">
    <reaction evidence="1">
        <text>betaine aldehyde + NAD(+) + H2O = glycine betaine + NADH + 2 H(+)</text>
        <dbReference type="Rhea" id="RHEA:15305"/>
        <dbReference type="ChEBI" id="CHEBI:15377"/>
        <dbReference type="ChEBI" id="CHEBI:15378"/>
        <dbReference type="ChEBI" id="CHEBI:15710"/>
        <dbReference type="ChEBI" id="CHEBI:17750"/>
        <dbReference type="ChEBI" id="CHEBI:57540"/>
        <dbReference type="ChEBI" id="CHEBI:57945"/>
        <dbReference type="EC" id="1.2.1.8"/>
    </reaction>
</comment>
<comment type="cofactor">
    <cofactor evidence="1">
        <name>FAD</name>
        <dbReference type="ChEBI" id="CHEBI:57692"/>
    </cofactor>
</comment>
<comment type="pathway">
    <text evidence="1">Amine and polyamine biosynthesis; betaine biosynthesis via choline pathway; betaine aldehyde from choline (cytochrome c reductase route): step 1/1.</text>
</comment>
<comment type="similarity">
    <text evidence="1">Belongs to the GMC oxidoreductase family.</text>
</comment>
<keyword id="KW-0274">FAD</keyword>
<keyword id="KW-0285">Flavoprotein</keyword>
<keyword id="KW-0520">NAD</keyword>
<keyword id="KW-0560">Oxidoreductase</keyword>
<evidence type="ECO:0000255" key="1">
    <source>
        <dbReference type="HAMAP-Rule" id="MF_00750"/>
    </source>
</evidence>
<evidence type="ECO:0000256" key="2">
    <source>
        <dbReference type="SAM" id="MobiDB-lite"/>
    </source>
</evidence>
<proteinExistence type="inferred from homology"/>
<reference key="1">
    <citation type="submission" date="2007-03" db="EMBL/GenBank/DDBJ databases">
        <title>Complete sequence of chromosome 2 of Burkholderia vietnamiensis G4.</title>
        <authorList>
            <consortium name="US DOE Joint Genome Institute"/>
            <person name="Copeland A."/>
            <person name="Lucas S."/>
            <person name="Lapidus A."/>
            <person name="Barry K."/>
            <person name="Detter J.C."/>
            <person name="Glavina del Rio T."/>
            <person name="Hammon N."/>
            <person name="Israni S."/>
            <person name="Dalin E."/>
            <person name="Tice H."/>
            <person name="Pitluck S."/>
            <person name="Chain P."/>
            <person name="Malfatti S."/>
            <person name="Shin M."/>
            <person name="Vergez L."/>
            <person name="Schmutz J."/>
            <person name="Larimer F."/>
            <person name="Land M."/>
            <person name="Hauser L."/>
            <person name="Kyrpides N."/>
            <person name="Tiedje J."/>
            <person name="Richardson P."/>
        </authorList>
    </citation>
    <scope>NUCLEOTIDE SEQUENCE [LARGE SCALE GENOMIC DNA]</scope>
    <source>
        <strain>G4 / LMG 22486</strain>
    </source>
</reference>
<dbReference type="EC" id="1.1.99.1" evidence="1"/>
<dbReference type="EC" id="1.2.1.8" evidence="1"/>
<dbReference type="EMBL" id="CP000615">
    <property type="protein sequence ID" value="ABO56419.1"/>
    <property type="molecule type" value="Genomic_DNA"/>
</dbReference>
<dbReference type="SMR" id="A4JJG6"/>
<dbReference type="KEGG" id="bvi:Bcep1808_3431"/>
<dbReference type="eggNOG" id="COG2303">
    <property type="taxonomic scope" value="Bacteria"/>
</dbReference>
<dbReference type="HOGENOM" id="CLU_002865_7_1_4"/>
<dbReference type="UniPathway" id="UPA00529">
    <property type="reaction ID" value="UER00385"/>
</dbReference>
<dbReference type="Proteomes" id="UP000002287">
    <property type="component" value="Chromosome 2"/>
</dbReference>
<dbReference type="GO" id="GO:0016020">
    <property type="term" value="C:membrane"/>
    <property type="evidence" value="ECO:0007669"/>
    <property type="project" value="TreeGrafter"/>
</dbReference>
<dbReference type="GO" id="GO:0008802">
    <property type="term" value="F:betaine-aldehyde dehydrogenase (NAD+) activity"/>
    <property type="evidence" value="ECO:0007669"/>
    <property type="project" value="UniProtKB-EC"/>
</dbReference>
<dbReference type="GO" id="GO:0008812">
    <property type="term" value="F:choline dehydrogenase activity"/>
    <property type="evidence" value="ECO:0007669"/>
    <property type="project" value="UniProtKB-UniRule"/>
</dbReference>
<dbReference type="GO" id="GO:0050660">
    <property type="term" value="F:flavin adenine dinucleotide binding"/>
    <property type="evidence" value="ECO:0007669"/>
    <property type="project" value="InterPro"/>
</dbReference>
<dbReference type="GO" id="GO:0019285">
    <property type="term" value="P:glycine betaine biosynthetic process from choline"/>
    <property type="evidence" value="ECO:0007669"/>
    <property type="project" value="UniProtKB-UniRule"/>
</dbReference>
<dbReference type="Gene3D" id="3.50.50.60">
    <property type="entry name" value="FAD/NAD(P)-binding domain"/>
    <property type="match status" value="1"/>
</dbReference>
<dbReference type="Gene3D" id="3.30.560.10">
    <property type="entry name" value="Glucose Oxidase, domain 3"/>
    <property type="match status" value="1"/>
</dbReference>
<dbReference type="HAMAP" id="MF_00750">
    <property type="entry name" value="Choline_dehydrogen"/>
    <property type="match status" value="1"/>
</dbReference>
<dbReference type="InterPro" id="IPR011533">
    <property type="entry name" value="BetA"/>
</dbReference>
<dbReference type="InterPro" id="IPR036188">
    <property type="entry name" value="FAD/NAD-bd_sf"/>
</dbReference>
<dbReference type="InterPro" id="IPR012132">
    <property type="entry name" value="GMC_OxRdtase"/>
</dbReference>
<dbReference type="InterPro" id="IPR000172">
    <property type="entry name" value="GMC_OxRdtase_N"/>
</dbReference>
<dbReference type="InterPro" id="IPR007867">
    <property type="entry name" value="GMC_OxRtase_C"/>
</dbReference>
<dbReference type="NCBIfam" id="TIGR01810">
    <property type="entry name" value="betA"/>
    <property type="match status" value="1"/>
</dbReference>
<dbReference type="NCBIfam" id="NF002550">
    <property type="entry name" value="PRK02106.1"/>
    <property type="match status" value="1"/>
</dbReference>
<dbReference type="PANTHER" id="PTHR11552:SF147">
    <property type="entry name" value="CHOLINE DEHYDROGENASE, MITOCHONDRIAL"/>
    <property type="match status" value="1"/>
</dbReference>
<dbReference type="PANTHER" id="PTHR11552">
    <property type="entry name" value="GLUCOSE-METHANOL-CHOLINE GMC OXIDOREDUCTASE"/>
    <property type="match status" value="1"/>
</dbReference>
<dbReference type="Pfam" id="PF05199">
    <property type="entry name" value="GMC_oxred_C"/>
    <property type="match status" value="1"/>
</dbReference>
<dbReference type="Pfam" id="PF00732">
    <property type="entry name" value="GMC_oxred_N"/>
    <property type="match status" value="1"/>
</dbReference>
<dbReference type="PIRSF" id="PIRSF000137">
    <property type="entry name" value="Alcohol_oxidase"/>
    <property type="match status" value="1"/>
</dbReference>
<dbReference type="SUPFAM" id="SSF54373">
    <property type="entry name" value="FAD-linked reductases, C-terminal domain"/>
    <property type="match status" value="1"/>
</dbReference>
<dbReference type="SUPFAM" id="SSF51905">
    <property type="entry name" value="FAD/NAD(P)-binding domain"/>
    <property type="match status" value="1"/>
</dbReference>
<dbReference type="PROSITE" id="PS00623">
    <property type="entry name" value="GMC_OXRED_1"/>
    <property type="match status" value="1"/>
</dbReference>
<dbReference type="PROSITE" id="PS00624">
    <property type="entry name" value="GMC_OXRED_2"/>
    <property type="match status" value="1"/>
</dbReference>
<name>BETA_BURVG</name>
<organism>
    <name type="scientific">Burkholderia vietnamiensis (strain G4 / LMG 22486)</name>
    <name type="common">Burkholderia cepacia (strain R1808)</name>
    <dbReference type="NCBI Taxonomy" id="269482"/>
    <lineage>
        <taxon>Bacteria</taxon>
        <taxon>Pseudomonadati</taxon>
        <taxon>Pseudomonadota</taxon>
        <taxon>Betaproteobacteria</taxon>
        <taxon>Burkholderiales</taxon>
        <taxon>Burkholderiaceae</taxon>
        <taxon>Burkholderia</taxon>
        <taxon>Burkholderia cepacia complex</taxon>
    </lineage>
</organism>